<dbReference type="EMBL" id="AY653733">
    <property type="protein sequence ID" value="AAV51082.1"/>
    <property type="molecule type" value="Genomic_DNA"/>
</dbReference>
<dbReference type="KEGG" id="vg:9925485"/>
<dbReference type="OrthoDB" id="10052at10239"/>
<dbReference type="Proteomes" id="UP000001134">
    <property type="component" value="Genome"/>
</dbReference>
<protein>
    <recommendedName>
        <fullName>Uncharacterized protein R822</fullName>
    </recommendedName>
</protein>
<accession>Q5UQH5</accession>
<proteinExistence type="predicted"/>
<organism>
    <name type="scientific">Acanthamoeba polyphaga mimivirus</name>
    <name type="common">APMV</name>
    <dbReference type="NCBI Taxonomy" id="212035"/>
    <lineage>
        <taxon>Viruses</taxon>
        <taxon>Varidnaviria</taxon>
        <taxon>Bamfordvirae</taxon>
        <taxon>Nucleocytoviricota</taxon>
        <taxon>Megaviricetes</taxon>
        <taxon>Imitervirales</taxon>
        <taxon>Mimiviridae</taxon>
        <taxon>Megamimivirinae</taxon>
        <taxon>Mimivirus</taxon>
        <taxon>Mimivirus bradfordmassiliense</taxon>
    </lineage>
</organism>
<feature type="chain" id="PRO_0000250636" description="Uncharacterized protein R822">
    <location>
        <begin position="1"/>
        <end position="581"/>
    </location>
</feature>
<organismHost>
    <name type="scientific">Acanthamoeba polyphaga</name>
    <name type="common">Amoeba</name>
    <dbReference type="NCBI Taxonomy" id="5757"/>
</organismHost>
<keyword id="KW-1185">Reference proteome</keyword>
<sequence>MFVYPLLISSILNMDMITSFISQHPKYNFLHYLNSGQNGSRQNLTNQIILLEKQTKIPTIAMYVFTKIFDNKIWEIPTNELCQGLVILFGKLGIKKINELAAGNGLLSARLKYFATKMNYVLDIDTSDGTNKMFGKHPFTFVPVREMNIRCYDKSEPIIISWLHCQFEDELLKSIKKHKQDYIFLIGDYPDSGGYNNTHSRHFHSKITSYKYGYWYKVISFNQLSQMDYFINDKIRKDMFVDCRTCVTLYYRIDREYNVAHIVSAVDSVQYEYPNLFGNYMDKNKEYYDQDWTVIKSTDNTIKNYMKNDYQGLDSIIIDGLKPYAEDKFCFERVNMFRIKRTDFDDVMDLFPIGMLNRQSQWSLPGYRRSPLSATAIASAYDSDIDPYTPSKIISKMFEDTSKIENEFIEHGSAQENSEMIHLKFATQLYSMMMQVHLSIMMSEQPLIMMPEQSSDMIDPFLNIIEPYWHTPLIEQKVLRAVRFSGHRIIDFDNNVLCSENYLVGQDINQKLDKNIYFSKRSYIDYPFGESQYFRDIETVYNILKRQDKLTKKIDNNRIFITNYPKHNRNHKTISRRTRYH</sequence>
<name>YR822_MIMIV</name>
<gene>
    <name type="ordered locus">MIMI_R822</name>
</gene>
<reference key="1">
    <citation type="journal article" date="2004" name="Science">
        <title>The 1.2-megabase genome sequence of Mimivirus.</title>
        <authorList>
            <person name="Raoult D."/>
            <person name="Audic S."/>
            <person name="Robert C."/>
            <person name="Abergel C."/>
            <person name="Renesto P."/>
            <person name="Ogata H."/>
            <person name="La Scola B."/>
            <person name="Susan M."/>
            <person name="Claverie J.-M."/>
        </authorList>
    </citation>
    <scope>NUCLEOTIDE SEQUENCE [LARGE SCALE GENOMIC DNA]</scope>
    <source>
        <strain>Rowbotham-Bradford</strain>
    </source>
</reference>